<gene>
    <name type="primary">ERG28</name>
</gene>
<comment type="subcellular location">
    <subcellularLocation>
        <location evidence="2">Endoplasmic reticulum membrane</location>
        <topology evidence="2">Multi-pass membrane protein</topology>
    </subcellularLocation>
</comment>
<comment type="similarity">
    <text evidence="2">Belongs to the ERG28 family.</text>
</comment>
<keyword id="KW-0256">Endoplasmic reticulum</keyword>
<keyword id="KW-0444">Lipid biosynthesis</keyword>
<keyword id="KW-0443">Lipid metabolism</keyword>
<keyword id="KW-0472">Membrane</keyword>
<keyword id="KW-1185">Reference proteome</keyword>
<keyword id="KW-0752">Steroid biosynthesis</keyword>
<keyword id="KW-0753">Steroid metabolism</keyword>
<keyword id="KW-0756">Sterol biosynthesis</keyword>
<keyword id="KW-1207">Sterol metabolism</keyword>
<keyword id="KW-0812">Transmembrane</keyword>
<keyword id="KW-1133">Transmembrane helix</keyword>
<accession>Q5R589</accession>
<organism>
    <name type="scientific">Pongo abelii</name>
    <name type="common">Sumatran orangutan</name>
    <name type="synonym">Pongo pygmaeus abelii</name>
    <dbReference type="NCBI Taxonomy" id="9601"/>
    <lineage>
        <taxon>Eukaryota</taxon>
        <taxon>Metazoa</taxon>
        <taxon>Chordata</taxon>
        <taxon>Craniata</taxon>
        <taxon>Vertebrata</taxon>
        <taxon>Euteleostomi</taxon>
        <taxon>Mammalia</taxon>
        <taxon>Eutheria</taxon>
        <taxon>Euarchontoglires</taxon>
        <taxon>Primates</taxon>
        <taxon>Haplorrhini</taxon>
        <taxon>Catarrhini</taxon>
        <taxon>Hominidae</taxon>
        <taxon>Pongo</taxon>
    </lineage>
</organism>
<feature type="chain" id="PRO_0000193905" description="Ergosterol biosynthetic protein 28 homolog">
    <location>
        <begin position="1"/>
        <end position="140"/>
    </location>
</feature>
<feature type="transmembrane region" description="Helical" evidence="1">
    <location>
        <begin position="4"/>
        <end position="24"/>
    </location>
</feature>
<feature type="transmembrane region" description="Helical" evidence="1">
    <location>
        <begin position="52"/>
        <end position="72"/>
    </location>
</feature>
<feature type="transmembrane region" description="Helical" evidence="1">
    <location>
        <begin position="79"/>
        <end position="99"/>
    </location>
</feature>
<feature type="transmembrane region" description="Helical" evidence="1">
    <location>
        <begin position="105"/>
        <end position="125"/>
    </location>
</feature>
<dbReference type="EMBL" id="CR860975">
    <property type="protein sequence ID" value="CAH93077.1"/>
    <property type="molecule type" value="mRNA"/>
</dbReference>
<dbReference type="RefSeq" id="NP_001128964.1">
    <property type="nucleotide sequence ID" value="NM_001135492.1"/>
</dbReference>
<dbReference type="FunCoup" id="Q5R589">
    <property type="interactions" value="700"/>
</dbReference>
<dbReference type="STRING" id="9601.ENSPPYP00000006832"/>
<dbReference type="Ensembl" id="ENSPPYT00000007101.3">
    <property type="protein sequence ID" value="ENSPPYP00000006832.2"/>
    <property type="gene ID" value="ENSPPYG00000006007.3"/>
</dbReference>
<dbReference type="GeneID" id="100190804"/>
<dbReference type="KEGG" id="pon:100190804"/>
<dbReference type="CTD" id="11161"/>
<dbReference type="eggNOG" id="KOG3455">
    <property type="taxonomic scope" value="Eukaryota"/>
</dbReference>
<dbReference type="GeneTree" id="ENSGT00390000010925"/>
<dbReference type="HOGENOM" id="CLU_114589_2_0_1"/>
<dbReference type="InParanoid" id="Q5R589"/>
<dbReference type="OMA" id="NIAIWTY"/>
<dbReference type="OrthoDB" id="6485510at2759"/>
<dbReference type="TreeFam" id="TF300191"/>
<dbReference type="Proteomes" id="UP000001595">
    <property type="component" value="Chromosome 14"/>
</dbReference>
<dbReference type="GO" id="GO:0005789">
    <property type="term" value="C:endoplasmic reticulum membrane"/>
    <property type="evidence" value="ECO:0007669"/>
    <property type="project" value="UniProtKB-SubCell"/>
</dbReference>
<dbReference type="GO" id="GO:0030133">
    <property type="term" value="C:transport vesicle"/>
    <property type="evidence" value="ECO:0007669"/>
    <property type="project" value="Ensembl"/>
</dbReference>
<dbReference type="GO" id="GO:0042802">
    <property type="term" value="F:identical protein binding"/>
    <property type="evidence" value="ECO:0007669"/>
    <property type="project" value="Ensembl"/>
</dbReference>
<dbReference type="GO" id="GO:0030674">
    <property type="term" value="F:protein-macromolecule adaptor activity"/>
    <property type="evidence" value="ECO:0007669"/>
    <property type="project" value="TreeGrafter"/>
</dbReference>
<dbReference type="GO" id="GO:0016126">
    <property type="term" value="P:sterol biosynthetic process"/>
    <property type="evidence" value="ECO:0007669"/>
    <property type="project" value="UniProtKB-KW"/>
</dbReference>
<dbReference type="InterPro" id="IPR005352">
    <property type="entry name" value="Erg28"/>
</dbReference>
<dbReference type="PANTHER" id="PTHR15451:SF19">
    <property type="entry name" value="ERGOSTEROL BIOSYNTHETIC PROTEIN 28 HOMOLOG"/>
    <property type="match status" value="1"/>
</dbReference>
<dbReference type="PANTHER" id="PTHR15451">
    <property type="entry name" value="ERGOSTEROL BIOSYNTHETIC PROTEIN 28-RELATED"/>
    <property type="match status" value="1"/>
</dbReference>
<dbReference type="Pfam" id="PF03694">
    <property type="entry name" value="Erg28"/>
    <property type="match status" value="1"/>
</dbReference>
<name>ERG28_PONAB</name>
<proteinExistence type="evidence at transcript level"/>
<evidence type="ECO:0000255" key="1"/>
<evidence type="ECO:0000305" key="2"/>
<sequence>MSRFLNVLRSWLVMVSIIAMGNTLQSFRDHTFLYEKLYTGKPNLVNGLQARTFGIWTLLSSVIRCLCAIDIHNKTLYHITLWTFLLALGHFLSELFVYGTAAPTIGVLAPLMVASFSILGMLVGLRYLEVEPVSRQKKRN</sequence>
<reference key="1">
    <citation type="submission" date="2004-11" db="EMBL/GenBank/DDBJ databases">
        <authorList>
            <consortium name="The German cDNA consortium"/>
        </authorList>
    </citation>
    <scope>NUCLEOTIDE SEQUENCE [LARGE SCALE MRNA]</scope>
    <source>
        <tissue>Brain cortex</tissue>
    </source>
</reference>
<protein>
    <recommendedName>
        <fullName>Ergosterol biosynthetic protein 28 homolog</fullName>
    </recommendedName>
</protein>